<organism>
    <name type="scientific">Campylobacter jejuni (strain RM1221)</name>
    <dbReference type="NCBI Taxonomy" id="195099"/>
    <lineage>
        <taxon>Bacteria</taxon>
        <taxon>Pseudomonadati</taxon>
        <taxon>Campylobacterota</taxon>
        <taxon>Epsilonproteobacteria</taxon>
        <taxon>Campylobacterales</taxon>
        <taxon>Campylobacteraceae</taxon>
        <taxon>Campylobacter</taxon>
    </lineage>
</organism>
<comment type="function">
    <text evidence="1">Catalyzes the ferrous insertion into protoporphyrin IX.</text>
</comment>
<comment type="catalytic activity">
    <reaction evidence="1">
        <text>heme b + 2 H(+) = protoporphyrin IX + Fe(2+)</text>
        <dbReference type="Rhea" id="RHEA:22584"/>
        <dbReference type="ChEBI" id="CHEBI:15378"/>
        <dbReference type="ChEBI" id="CHEBI:29033"/>
        <dbReference type="ChEBI" id="CHEBI:57306"/>
        <dbReference type="ChEBI" id="CHEBI:60344"/>
        <dbReference type="EC" id="4.98.1.1"/>
    </reaction>
</comment>
<comment type="pathway">
    <text evidence="1">Porphyrin-containing compound metabolism; protoheme biosynthesis; protoheme from protoporphyrin-IX: step 1/1.</text>
</comment>
<comment type="subcellular location">
    <subcellularLocation>
        <location evidence="1">Cytoplasm</location>
    </subcellularLocation>
</comment>
<comment type="similarity">
    <text evidence="1">Belongs to the ferrochelatase family.</text>
</comment>
<dbReference type="EC" id="4.98.1.1" evidence="1"/>
<dbReference type="EMBL" id="CP000025">
    <property type="protein sequence ID" value="AAW35877.1"/>
    <property type="molecule type" value="Genomic_DNA"/>
</dbReference>
<dbReference type="RefSeq" id="WP_011049728.1">
    <property type="nucleotide sequence ID" value="NC_003912.7"/>
</dbReference>
<dbReference type="SMR" id="Q5HVR0"/>
<dbReference type="KEGG" id="cjr:CJE0610"/>
<dbReference type="HOGENOM" id="CLU_018884_4_1_7"/>
<dbReference type="UniPathway" id="UPA00252">
    <property type="reaction ID" value="UER00325"/>
</dbReference>
<dbReference type="GO" id="GO:0005737">
    <property type="term" value="C:cytoplasm"/>
    <property type="evidence" value="ECO:0007669"/>
    <property type="project" value="UniProtKB-SubCell"/>
</dbReference>
<dbReference type="GO" id="GO:0004325">
    <property type="term" value="F:ferrochelatase activity"/>
    <property type="evidence" value="ECO:0007669"/>
    <property type="project" value="UniProtKB-UniRule"/>
</dbReference>
<dbReference type="GO" id="GO:0046872">
    <property type="term" value="F:metal ion binding"/>
    <property type="evidence" value="ECO:0007669"/>
    <property type="project" value="UniProtKB-KW"/>
</dbReference>
<dbReference type="GO" id="GO:0006783">
    <property type="term" value="P:heme biosynthetic process"/>
    <property type="evidence" value="ECO:0007669"/>
    <property type="project" value="UniProtKB-UniRule"/>
</dbReference>
<dbReference type="CDD" id="cd00419">
    <property type="entry name" value="Ferrochelatase_C"/>
    <property type="match status" value="1"/>
</dbReference>
<dbReference type="CDD" id="cd03411">
    <property type="entry name" value="Ferrochelatase_N"/>
    <property type="match status" value="1"/>
</dbReference>
<dbReference type="Gene3D" id="3.40.50.1400">
    <property type="match status" value="2"/>
</dbReference>
<dbReference type="HAMAP" id="MF_00323">
    <property type="entry name" value="Ferrochelatase"/>
    <property type="match status" value="1"/>
</dbReference>
<dbReference type="InterPro" id="IPR001015">
    <property type="entry name" value="Ferrochelatase"/>
</dbReference>
<dbReference type="InterPro" id="IPR019772">
    <property type="entry name" value="Ferrochelatase_AS"/>
</dbReference>
<dbReference type="InterPro" id="IPR033644">
    <property type="entry name" value="Ferrochelatase_C"/>
</dbReference>
<dbReference type="InterPro" id="IPR033659">
    <property type="entry name" value="Ferrochelatase_N"/>
</dbReference>
<dbReference type="NCBIfam" id="TIGR00109">
    <property type="entry name" value="hemH"/>
    <property type="match status" value="1"/>
</dbReference>
<dbReference type="PANTHER" id="PTHR11108">
    <property type="entry name" value="FERROCHELATASE"/>
    <property type="match status" value="1"/>
</dbReference>
<dbReference type="PANTHER" id="PTHR11108:SF1">
    <property type="entry name" value="FERROCHELATASE, MITOCHONDRIAL"/>
    <property type="match status" value="1"/>
</dbReference>
<dbReference type="Pfam" id="PF00762">
    <property type="entry name" value="Ferrochelatase"/>
    <property type="match status" value="1"/>
</dbReference>
<dbReference type="SUPFAM" id="SSF53800">
    <property type="entry name" value="Chelatase"/>
    <property type="match status" value="1"/>
</dbReference>
<dbReference type="PROSITE" id="PS00534">
    <property type="entry name" value="FERROCHELATASE"/>
    <property type="match status" value="1"/>
</dbReference>
<gene>
    <name evidence="1" type="primary">hemH</name>
    <name type="ordered locus">CJE0610</name>
</gene>
<sequence>MKLVLFLNMGGATNLQDCEVFLKNMFNDPYILGIKNRFLRKFVAWIITKARVKAMQENYKKMGGKSPLNELTQSLCDKLNLKQDEFKFDFVNLYVPPFATEILQKYTLNASDEIILFPLYPHHSCTTVTSSLEVLQNEISKQKIQAKVKTIDIFYKNELYNEMIVSHILDKKSKFDAKILIFSAHSLPQSIIDKGDLYEKHVNDHVEILKEKLKDHFDEFILAYQSKLGPVKWLEPNTSDVLANLNDKALIYPISFCIDCSETIFELGMEYKHLAKCDYDLISCPNNSDEFMKFILKYLSDLN</sequence>
<name>HEMH_CAMJR</name>
<accession>Q5HVR0</accession>
<evidence type="ECO:0000255" key="1">
    <source>
        <dbReference type="HAMAP-Rule" id="MF_00323"/>
    </source>
</evidence>
<keyword id="KW-0963">Cytoplasm</keyword>
<keyword id="KW-0350">Heme biosynthesis</keyword>
<keyword id="KW-0408">Iron</keyword>
<keyword id="KW-0456">Lyase</keyword>
<keyword id="KW-0479">Metal-binding</keyword>
<keyword id="KW-0627">Porphyrin biosynthesis</keyword>
<protein>
    <recommendedName>
        <fullName evidence="1">Ferrochelatase</fullName>
        <ecNumber evidence="1">4.98.1.1</ecNumber>
    </recommendedName>
    <alternativeName>
        <fullName evidence="1">Heme synthase</fullName>
    </alternativeName>
    <alternativeName>
        <fullName evidence="1">Protoheme ferro-lyase</fullName>
    </alternativeName>
</protein>
<feature type="chain" id="PRO_1000019289" description="Ferrochelatase">
    <location>
        <begin position="1"/>
        <end position="303"/>
    </location>
</feature>
<feature type="binding site" evidence="1">
    <location>
        <position position="185"/>
    </location>
    <ligand>
        <name>Fe cation</name>
        <dbReference type="ChEBI" id="CHEBI:24875"/>
    </ligand>
</feature>
<feature type="binding site" evidence="1">
    <location>
        <position position="262"/>
    </location>
    <ligand>
        <name>Fe cation</name>
        <dbReference type="ChEBI" id="CHEBI:24875"/>
    </ligand>
</feature>
<proteinExistence type="inferred from homology"/>
<reference key="1">
    <citation type="journal article" date="2005" name="PLoS Biol.">
        <title>Major structural differences and novel potential virulence mechanisms from the genomes of multiple Campylobacter species.</title>
        <authorList>
            <person name="Fouts D.E."/>
            <person name="Mongodin E.F."/>
            <person name="Mandrell R.E."/>
            <person name="Miller W.G."/>
            <person name="Rasko D.A."/>
            <person name="Ravel J."/>
            <person name="Brinkac L.M."/>
            <person name="DeBoy R.T."/>
            <person name="Parker C.T."/>
            <person name="Daugherty S.C."/>
            <person name="Dodson R.J."/>
            <person name="Durkin A.S."/>
            <person name="Madupu R."/>
            <person name="Sullivan S.A."/>
            <person name="Shetty J.U."/>
            <person name="Ayodeji M.A."/>
            <person name="Shvartsbeyn A."/>
            <person name="Schatz M.C."/>
            <person name="Badger J.H."/>
            <person name="Fraser C.M."/>
            <person name="Nelson K.E."/>
        </authorList>
    </citation>
    <scope>NUCLEOTIDE SEQUENCE [LARGE SCALE GENOMIC DNA]</scope>
    <source>
        <strain>RM1221</strain>
    </source>
</reference>